<comment type="function">
    <text evidence="2">GTP hydrolase that promotes the GTP-dependent binding of aminoacyl-tRNA to the A-site of ribosomes during protein biosynthesis.</text>
</comment>
<comment type="catalytic activity">
    <reaction evidence="2">
        <text>GTP + H2O = GDP + phosphate + H(+)</text>
        <dbReference type="Rhea" id="RHEA:19669"/>
        <dbReference type="ChEBI" id="CHEBI:15377"/>
        <dbReference type="ChEBI" id="CHEBI:15378"/>
        <dbReference type="ChEBI" id="CHEBI:37565"/>
        <dbReference type="ChEBI" id="CHEBI:43474"/>
        <dbReference type="ChEBI" id="CHEBI:58189"/>
        <dbReference type="EC" id="3.6.5.3"/>
    </reaction>
    <physiologicalReaction direction="left-to-right" evidence="2">
        <dbReference type="Rhea" id="RHEA:19670"/>
    </physiologicalReaction>
</comment>
<comment type="subunit">
    <text evidence="2">Monomer.</text>
</comment>
<comment type="subcellular location">
    <subcellularLocation>
        <location evidence="2">Cytoplasm</location>
    </subcellularLocation>
</comment>
<comment type="similarity">
    <text evidence="2">Belongs to the TRAFAC class translation factor GTPase superfamily. Classic translation factor GTPase family. EF-Tu/EF-1A subfamily.</text>
</comment>
<organism>
    <name type="scientific">Shigella flexneri serotype 5b (strain 8401)</name>
    <dbReference type="NCBI Taxonomy" id="373384"/>
    <lineage>
        <taxon>Bacteria</taxon>
        <taxon>Pseudomonadati</taxon>
        <taxon>Pseudomonadota</taxon>
        <taxon>Gammaproteobacteria</taxon>
        <taxon>Enterobacterales</taxon>
        <taxon>Enterobacteriaceae</taxon>
        <taxon>Shigella</taxon>
    </lineage>
</organism>
<protein>
    <recommendedName>
        <fullName evidence="2">Elongation factor Tu 2</fullName>
        <shortName evidence="2">EF-Tu 2</shortName>
        <ecNumber evidence="2">3.6.5.3</ecNumber>
    </recommendedName>
</protein>
<proteinExistence type="inferred from homology"/>
<name>EFTU2_SHIF8</name>
<evidence type="ECO:0000250" key="1"/>
<evidence type="ECO:0000255" key="2">
    <source>
        <dbReference type="HAMAP-Rule" id="MF_00118"/>
    </source>
</evidence>
<reference key="1">
    <citation type="journal article" date="2006" name="BMC Genomics">
        <title>Complete genome sequence of Shigella flexneri 5b and comparison with Shigella flexneri 2a.</title>
        <authorList>
            <person name="Nie H."/>
            <person name="Yang F."/>
            <person name="Zhang X."/>
            <person name="Yang J."/>
            <person name="Chen L."/>
            <person name="Wang J."/>
            <person name="Xiong Z."/>
            <person name="Peng J."/>
            <person name="Sun L."/>
            <person name="Dong J."/>
            <person name="Xue Y."/>
            <person name="Xu X."/>
            <person name="Chen S."/>
            <person name="Yao Z."/>
            <person name="Shen Y."/>
            <person name="Jin Q."/>
        </authorList>
    </citation>
    <scope>NUCLEOTIDE SEQUENCE [LARGE SCALE GENOMIC DNA]</scope>
    <source>
        <strain>8401</strain>
    </source>
</reference>
<gene>
    <name evidence="2" type="primary">tuf2</name>
    <name type="synonym">tufB</name>
    <name type="ordered locus">SFV_4052</name>
</gene>
<dbReference type="EC" id="3.6.5.3" evidence="2"/>
<dbReference type="EMBL" id="CP000266">
    <property type="protein sequence ID" value="ABF06045.1"/>
    <property type="molecule type" value="Genomic_DNA"/>
</dbReference>
<dbReference type="SMR" id="Q0SY20"/>
<dbReference type="KEGG" id="sfv:SFV_4052"/>
<dbReference type="HOGENOM" id="CLU_007265_0_2_6"/>
<dbReference type="Proteomes" id="UP000000659">
    <property type="component" value="Chromosome"/>
</dbReference>
<dbReference type="GO" id="GO:0005829">
    <property type="term" value="C:cytosol"/>
    <property type="evidence" value="ECO:0007669"/>
    <property type="project" value="TreeGrafter"/>
</dbReference>
<dbReference type="GO" id="GO:0005525">
    <property type="term" value="F:GTP binding"/>
    <property type="evidence" value="ECO:0007669"/>
    <property type="project" value="UniProtKB-UniRule"/>
</dbReference>
<dbReference type="GO" id="GO:0003924">
    <property type="term" value="F:GTPase activity"/>
    <property type="evidence" value="ECO:0007669"/>
    <property type="project" value="InterPro"/>
</dbReference>
<dbReference type="GO" id="GO:0097216">
    <property type="term" value="F:guanosine tetraphosphate binding"/>
    <property type="evidence" value="ECO:0007669"/>
    <property type="project" value="UniProtKB-ARBA"/>
</dbReference>
<dbReference type="GO" id="GO:0003746">
    <property type="term" value="F:translation elongation factor activity"/>
    <property type="evidence" value="ECO:0007669"/>
    <property type="project" value="UniProtKB-UniRule"/>
</dbReference>
<dbReference type="CDD" id="cd01884">
    <property type="entry name" value="EF_Tu"/>
    <property type="match status" value="1"/>
</dbReference>
<dbReference type="CDD" id="cd03697">
    <property type="entry name" value="EFTU_II"/>
    <property type="match status" value="1"/>
</dbReference>
<dbReference type="CDD" id="cd03707">
    <property type="entry name" value="EFTU_III"/>
    <property type="match status" value="1"/>
</dbReference>
<dbReference type="FunFam" id="2.40.30.10:FF:000001">
    <property type="entry name" value="Elongation factor Tu"/>
    <property type="match status" value="1"/>
</dbReference>
<dbReference type="FunFam" id="3.40.50.300:FF:000003">
    <property type="entry name" value="Elongation factor Tu"/>
    <property type="match status" value="1"/>
</dbReference>
<dbReference type="Gene3D" id="3.40.50.300">
    <property type="entry name" value="P-loop containing nucleotide triphosphate hydrolases"/>
    <property type="match status" value="1"/>
</dbReference>
<dbReference type="Gene3D" id="2.40.30.10">
    <property type="entry name" value="Translation factors"/>
    <property type="match status" value="2"/>
</dbReference>
<dbReference type="HAMAP" id="MF_00118_B">
    <property type="entry name" value="EF_Tu_B"/>
    <property type="match status" value="1"/>
</dbReference>
<dbReference type="InterPro" id="IPR041709">
    <property type="entry name" value="EF-Tu_GTP-bd"/>
</dbReference>
<dbReference type="InterPro" id="IPR050055">
    <property type="entry name" value="EF-Tu_GTPase"/>
</dbReference>
<dbReference type="InterPro" id="IPR004161">
    <property type="entry name" value="EFTu-like_2"/>
</dbReference>
<dbReference type="InterPro" id="IPR033720">
    <property type="entry name" value="EFTU_2"/>
</dbReference>
<dbReference type="InterPro" id="IPR031157">
    <property type="entry name" value="G_TR_CS"/>
</dbReference>
<dbReference type="InterPro" id="IPR027417">
    <property type="entry name" value="P-loop_NTPase"/>
</dbReference>
<dbReference type="InterPro" id="IPR005225">
    <property type="entry name" value="Small_GTP-bd"/>
</dbReference>
<dbReference type="InterPro" id="IPR000795">
    <property type="entry name" value="T_Tr_GTP-bd_dom"/>
</dbReference>
<dbReference type="InterPro" id="IPR009000">
    <property type="entry name" value="Transl_B-barrel_sf"/>
</dbReference>
<dbReference type="InterPro" id="IPR009001">
    <property type="entry name" value="Transl_elong_EF1A/Init_IF2_C"/>
</dbReference>
<dbReference type="InterPro" id="IPR004541">
    <property type="entry name" value="Transl_elong_EFTu/EF1A_bac/org"/>
</dbReference>
<dbReference type="InterPro" id="IPR004160">
    <property type="entry name" value="Transl_elong_EFTu/EF1A_C"/>
</dbReference>
<dbReference type="NCBIfam" id="TIGR00485">
    <property type="entry name" value="EF-Tu"/>
    <property type="match status" value="1"/>
</dbReference>
<dbReference type="NCBIfam" id="NF000766">
    <property type="entry name" value="PRK00049.1"/>
    <property type="match status" value="1"/>
</dbReference>
<dbReference type="NCBIfam" id="NF009372">
    <property type="entry name" value="PRK12735.1"/>
    <property type="match status" value="1"/>
</dbReference>
<dbReference type="NCBIfam" id="NF009373">
    <property type="entry name" value="PRK12736.1"/>
    <property type="match status" value="1"/>
</dbReference>
<dbReference type="NCBIfam" id="TIGR00231">
    <property type="entry name" value="small_GTP"/>
    <property type="match status" value="1"/>
</dbReference>
<dbReference type="PANTHER" id="PTHR43721:SF22">
    <property type="entry name" value="ELONGATION FACTOR TU, MITOCHONDRIAL"/>
    <property type="match status" value="1"/>
</dbReference>
<dbReference type="PANTHER" id="PTHR43721">
    <property type="entry name" value="ELONGATION FACTOR TU-RELATED"/>
    <property type="match status" value="1"/>
</dbReference>
<dbReference type="Pfam" id="PF00009">
    <property type="entry name" value="GTP_EFTU"/>
    <property type="match status" value="1"/>
</dbReference>
<dbReference type="Pfam" id="PF03144">
    <property type="entry name" value="GTP_EFTU_D2"/>
    <property type="match status" value="1"/>
</dbReference>
<dbReference type="Pfam" id="PF03143">
    <property type="entry name" value="GTP_EFTU_D3"/>
    <property type="match status" value="1"/>
</dbReference>
<dbReference type="PRINTS" id="PR00315">
    <property type="entry name" value="ELONGATNFCT"/>
</dbReference>
<dbReference type="SUPFAM" id="SSF50465">
    <property type="entry name" value="EF-Tu/eEF-1alpha/eIF2-gamma C-terminal domain"/>
    <property type="match status" value="1"/>
</dbReference>
<dbReference type="SUPFAM" id="SSF52540">
    <property type="entry name" value="P-loop containing nucleoside triphosphate hydrolases"/>
    <property type="match status" value="1"/>
</dbReference>
<dbReference type="SUPFAM" id="SSF50447">
    <property type="entry name" value="Translation proteins"/>
    <property type="match status" value="1"/>
</dbReference>
<dbReference type="PROSITE" id="PS00301">
    <property type="entry name" value="G_TR_1"/>
    <property type="match status" value="1"/>
</dbReference>
<dbReference type="PROSITE" id="PS51722">
    <property type="entry name" value="G_TR_2"/>
    <property type="match status" value="1"/>
</dbReference>
<sequence length="394" mass="43314">MSKEKFERTKPHVNVGTIGHVDHGKTTLTAAITTVLAKTYGGAARAFDQIDNAPEEKARGITINTSHVEYDTPTRHYAHVDCPGHADYVKNMITGAAQMDGAILVVAATDGPMPQTREHILLGRQVGVPYIIVFLNKCDMVDDEELLELVEMEVRELLSQYDFPGDDTPIVRGSALKALEGDAEWEAKILELAGFLDSYIPEPERAIDKPFLLPIEDVFSISGRGTVVTGRVERGIIKVGEEVEIVGIKETQKSTCTGVEMFRKLLDEGRAGENVGVLLRGIKREEIERGQVLAKPGTIKPHTKFESEVYILSKDEGGRHTPFFKGYRPQFYFRTTDVTGTIELPEGVEMVMPGDNIKMVVTLIHPIAMDDGLRFAIREGGRTVGAGVVAKVLS</sequence>
<accession>Q0SY20</accession>
<keyword id="KW-0963">Cytoplasm</keyword>
<keyword id="KW-0251">Elongation factor</keyword>
<keyword id="KW-0342">GTP-binding</keyword>
<keyword id="KW-0378">Hydrolase</keyword>
<keyword id="KW-0460">Magnesium</keyword>
<keyword id="KW-0479">Metal-binding</keyword>
<keyword id="KW-0547">Nucleotide-binding</keyword>
<keyword id="KW-0648">Protein biosynthesis</keyword>
<feature type="chain" id="PRO_0000337541" description="Elongation factor Tu 2">
    <location>
        <begin position="1"/>
        <end position="394"/>
    </location>
</feature>
<feature type="domain" description="tr-type G">
    <location>
        <begin position="10"/>
        <end position="204"/>
    </location>
</feature>
<feature type="region of interest" description="G1" evidence="1">
    <location>
        <begin position="19"/>
        <end position="26"/>
    </location>
</feature>
<feature type="region of interest" description="G2" evidence="1">
    <location>
        <begin position="60"/>
        <end position="64"/>
    </location>
</feature>
<feature type="region of interest" description="G3" evidence="1">
    <location>
        <begin position="81"/>
        <end position="84"/>
    </location>
</feature>
<feature type="region of interest" description="G4" evidence="1">
    <location>
        <begin position="136"/>
        <end position="139"/>
    </location>
</feature>
<feature type="region of interest" description="G5" evidence="1">
    <location>
        <begin position="174"/>
        <end position="176"/>
    </location>
</feature>
<feature type="binding site" evidence="2">
    <location>
        <begin position="19"/>
        <end position="26"/>
    </location>
    <ligand>
        <name>GTP</name>
        <dbReference type="ChEBI" id="CHEBI:37565"/>
    </ligand>
</feature>
<feature type="binding site" evidence="2">
    <location>
        <position position="26"/>
    </location>
    <ligand>
        <name>Mg(2+)</name>
        <dbReference type="ChEBI" id="CHEBI:18420"/>
    </ligand>
</feature>
<feature type="binding site" evidence="2">
    <location>
        <begin position="81"/>
        <end position="85"/>
    </location>
    <ligand>
        <name>GTP</name>
        <dbReference type="ChEBI" id="CHEBI:37565"/>
    </ligand>
</feature>
<feature type="binding site" evidence="2">
    <location>
        <begin position="136"/>
        <end position="139"/>
    </location>
    <ligand>
        <name>GTP</name>
        <dbReference type="ChEBI" id="CHEBI:37565"/>
    </ligand>
</feature>